<name>AP24_ORYSI</name>
<comment type="function">
    <text evidence="1 2">Probable transcription factor (By similarity). Involved in spikelet transition. Prevents lemma and palea elongation as well as grain growth (By similarity).</text>
</comment>
<comment type="subunit">
    <text evidence="2">May form homodimer.</text>
</comment>
<comment type="subcellular location">
    <subcellularLocation>
        <location evidence="4">Nucleus</location>
    </subcellularLocation>
</comment>
<comment type="similarity">
    <text evidence="6">Belongs to the AP2/ERF transcription factor family. AP2 subfamily.</text>
</comment>
<protein>
    <recommendedName>
        <fullName evidence="6">APETALA2-like protein 4</fullName>
    </recommendedName>
</protein>
<sequence>MAATFYGVGSIALAMHEDDEEEGSGRVFGFAAGDLVRPAVVTQQLFPMTAAAAAVVPESTEQRHVAAAAEQWARPPSRKTRRGPRSRSSQYRGVTFYRRTGRWESHIWDCGKQVYLGGFDTAQAAARAYDQAAIKFRGVEADINFTLDDYKEDIKKMNNFSKEEFVQVLRRQGVGFVRGSSRFRGVTLHKCGKWEARIGQLMGKKYVYLGLYDTEMEAAKAYDKAAIKCCGKEAVTNFDTQSYEDELNLQSWDSELDLELSLGCSGGERAAGEVLHSAPSNQRTSLTFMLPEEEEMTACHRQRSIWARPSLAPAMPDGGAVICPDQHQHHPSSRNMLLMSQVISSGGGGGSGRQGAAELHMRPRHGWSSGGNNWAPPYAARPRLPGAEDDDDDDSAAAASSGFPMGQVATASSSSRPSSSSCSSRRSSTAAATATTGR</sequence>
<keyword id="KW-0238">DNA-binding</keyword>
<keyword id="KW-0539">Nucleus</keyword>
<keyword id="KW-1185">Reference proteome</keyword>
<keyword id="KW-0677">Repeat</keyword>
<keyword id="KW-0804">Transcription</keyword>
<keyword id="KW-0805">Transcription regulation</keyword>
<gene>
    <name evidence="6" type="primary">AP2-4</name>
    <name evidence="7" type="ORF">OsI_23840</name>
</gene>
<dbReference type="EMBL" id="CM000131">
    <property type="protein sequence ID" value="EEC81048.1"/>
    <property type="molecule type" value="Genomic_DNA"/>
</dbReference>
<dbReference type="SMR" id="B8B0I8"/>
<dbReference type="STRING" id="39946.B8B0I8"/>
<dbReference type="EnsemblPlants" id="BGIOSGA020813-TA">
    <property type="protein sequence ID" value="BGIOSGA020813-PA"/>
    <property type="gene ID" value="BGIOSGA020813"/>
</dbReference>
<dbReference type="Gramene" id="BGIOSGA020813-TA">
    <property type="protein sequence ID" value="BGIOSGA020813-PA"/>
    <property type="gene ID" value="BGIOSGA020813"/>
</dbReference>
<dbReference type="HOGENOM" id="CLU_035462_2_0_1"/>
<dbReference type="OMA" id="NNWAPPY"/>
<dbReference type="Proteomes" id="UP000007015">
    <property type="component" value="Chromosome 6"/>
</dbReference>
<dbReference type="GO" id="GO:0005634">
    <property type="term" value="C:nucleus"/>
    <property type="evidence" value="ECO:0007669"/>
    <property type="project" value="UniProtKB-SubCell"/>
</dbReference>
<dbReference type="GO" id="GO:0003677">
    <property type="term" value="F:DNA binding"/>
    <property type="evidence" value="ECO:0007669"/>
    <property type="project" value="UniProtKB-KW"/>
</dbReference>
<dbReference type="GO" id="GO:0003700">
    <property type="term" value="F:DNA-binding transcription factor activity"/>
    <property type="evidence" value="ECO:0007669"/>
    <property type="project" value="InterPro"/>
</dbReference>
<dbReference type="GO" id="GO:0009909">
    <property type="term" value="P:regulation of flower development"/>
    <property type="evidence" value="ECO:0007669"/>
    <property type="project" value="EnsemblPlants"/>
</dbReference>
<dbReference type="GO" id="GO:0080050">
    <property type="term" value="P:regulation of seed development"/>
    <property type="evidence" value="ECO:0007669"/>
    <property type="project" value="EnsemblPlants"/>
</dbReference>
<dbReference type="CDD" id="cd00018">
    <property type="entry name" value="AP2"/>
    <property type="match status" value="1"/>
</dbReference>
<dbReference type="FunFam" id="3.30.730.10:FF:000004">
    <property type="entry name" value="AP2-like ethylene-responsive transcription factor"/>
    <property type="match status" value="1"/>
</dbReference>
<dbReference type="Gene3D" id="3.30.730.10">
    <property type="entry name" value="AP2/ERF domain"/>
    <property type="match status" value="2"/>
</dbReference>
<dbReference type="InterPro" id="IPR001471">
    <property type="entry name" value="AP2/ERF_dom"/>
</dbReference>
<dbReference type="InterPro" id="IPR036955">
    <property type="entry name" value="AP2/ERF_dom_sf"/>
</dbReference>
<dbReference type="InterPro" id="IPR016177">
    <property type="entry name" value="DNA-bd_dom_sf"/>
</dbReference>
<dbReference type="PANTHER" id="PTHR32467">
    <property type="entry name" value="AP2-LIKE ETHYLENE-RESPONSIVE TRANSCRIPTION FACTOR"/>
    <property type="match status" value="1"/>
</dbReference>
<dbReference type="PANTHER" id="PTHR32467:SF9">
    <property type="entry name" value="APETALA2-LIKE PROTEIN 4"/>
    <property type="match status" value="1"/>
</dbReference>
<dbReference type="Pfam" id="PF00847">
    <property type="entry name" value="AP2"/>
    <property type="match status" value="2"/>
</dbReference>
<dbReference type="PRINTS" id="PR00367">
    <property type="entry name" value="ETHRSPELEMNT"/>
</dbReference>
<dbReference type="SMART" id="SM00380">
    <property type="entry name" value="AP2"/>
    <property type="match status" value="2"/>
</dbReference>
<dbReference type="SUPFAM" id="SSF54171">
    <property type="entry name" value="DNA-binding domain"/>
    <property type="match status" value="2"/>
</dbReference>
<dbReference type="PROSITE" id="PS51032">
    <property type="entry name" value="AP2_ERF"/>
    <property type="match status" value="2"/>
</dbReference>
<feature type="chain" id="PRO_0000445994" description="APETALA2-like protein 4">
    <location>
        <begin position="1"/>
        <end position="438"/>
    </location>
</feature>
<feature type="DNA-binding region" description="AP2/ERF 1" evidence="4">
    <location>
        <begin position="90"/>
        <end position="146"/>
    </location>
</feature>
<feature type="DNA-binding region" description="AP2/ERF 2" evidence="4">
    <location>
        <begin position="182"/>
        <end position="239"/>
    </location>
</feature>
<feature type="region of interest" description="Disordered" evidence="5">
    <location>
        <begin position="67"/>
        <end position="88"/>
    </location>
</feature>
<feature type="region of interest" description="Disordered" evidence="5">
    <location>
        <begin position="362"/>
        <end position="438"/>
    </location>
</feature>
<feature type="short sequence motif" description="Nuclear localization signal" evidence="3">
    <location>
        <begin position="78"/>
        <end position="87"/>
    </location>
</feature>
<feature type="short sequence motif" description="EAR" evidence="2">
    <location>
        <begin position="258"/>
        <end position="262"/>
    </location>
</feature>
<feature type="compositionally biased region" description="Basic residues" evidence="5">
    <location>
        <begin position="76"/>
        <end position="85"/>
    </location>
</feature>
<feature type="compositionally biased region" description="Low complexity" evidence="5">
    <location>
        <begin position="409"/>
        <end position="438"/>
    </location>
</feature>
<proteinExistence type="inferred from homology"/>
<organism>
    <name type="scientific">Oryza sativa subsp. indica</name>
    <name type="common">Rice</name>
    <dbReference type="NCBI Taxonomy" id="39946"/>
    <lineage>
        <taxon>Eukaryota</taxon>
        <taxon>Viridiplantae</taxon>
        <taxon>Streptophyta</taxon>
        <taxon>Embryophyta</taxon>
        <taxon>Tracheophyta</taxon>
        <taxon>Spermatophyta</taxon>
        <taxon>Magnoliopsida</taxon>
        <taxon>Liliopsida</taxon>
        <taxon>Poales</taxon>
        <taxon>Poaceae</taxon>
        <taxon>BOP clade</taxon>
        <taxon>Oryzoideae</taxon>
        <taxon>Oryzeae</taxon>
        <taxon>Oryzinae</taxon>
        <taxon>Oryza</taxon>
        <taxon>Oryza sativa</taxon>
    </lineage>
</organism>
<accession>B8B0I8</accession>
<evidence type="ECO:0000250" key="1">
    <source>
        <dbReference type="UniProtKB" id="A0A0N7KMH0"/>
    </source>
</evidence>
<evidence type="ECO:0000250" key="2">
    <source>
        <dbReference type="UniProtKB" id="P47927"/>
    </source>
</evidence>
<evidence type="ECO:0000255" key="3"/>
<evidence type="ECO:0000255" key="4">
    <source>
        <dbReference type="PROSITE-ProRule" id="PRU00366"/>
    </source>
</evidence>
<evidence type="ECO:0000256" key="5">
    <source>
        <dbReference type="SAM" id="MobiDB-lite"/>
    </source>
</evidence>
<evidence type="ECO:0000305" key="6"/>
<evidence type="ECO:0000312" key="7">
    <source>
        <dbReference type="EMBL" id="EEC81048.1"/>
    </source>
</evidence>
<reference key="1">
    <citation type="journal article" date="2005" name="PLoS Biol.">
        <title>The genomes of Oryza sativa: a history of duplications.</title>
        <authorList>
            <person name="Yu J."/>
            <person name="Wang J."/>
            <person name="Lin W."/>
            <person name="Li S."/>
            <person name="Li H."/>
            <person name="Zhou J."/>
            <person name="Ni P."/>
            <person name="Dong W."/>
            <person name="Hu S."/>
            <person name="Zeng C."/>
            <person name="Zhang J."/>
            <person name="Zhang Y."/>
            <person name="Li R."/>
            <person name="Xu Z."/>
            <person name="Li S."/>
            <person name="Li X."/>
            <person name="Zheng H."/>
            <person name="Cong L."/>
            <person name="Lin L."/>
            <person name="Yin J."/>
            <person name="Geng J."/>
            <person name="Li G."/>
            <person name="Shi J."/>
            <person name="Liu J."/>
            <person name="Lv H."/>
            <person name="Li J."/>
            <person name="Wang J."/>
            <person name="Deng Y."/>
            <person name="Ran L."/>
            <person name="Shi X."/>
            <person name="Wang X."/>
            <person name="Wu Q."/>
            <person name="Li C."/>
            <person name="Ren X."/>
            <person name="Wang J."/>
            <person name="Wang X."/>
            <person name="Li D."/>
            <person name="Liu D."/>
            <person name="Zhang X."/>
            <person name="Ji Z."/>
            <person name="Zhao W."/>
            <person name="Sun Y."/>
            <person name="Zhang Z."/>
            <person name="Bao J."/>
            <person name="Han Y."/>
            <person name="Dong L."/>
            <person name="Ji J."/>
            <person name="Chen P."/>
            <person name="Wu S."/>
            <person name="Liu J."/>
            <person name="Xiao Y."/>
            <person name="Bu D."/>
            <person name="Tan J."/>
            <person name="Yang L."/>
            <person name="Ye C."/>
            <person name="Zhang J."/>
            <person name="Xu J."/>
            <person name="Zhou Y."/>
            <person name="Yu Y."/>
            <person name="Zhang B."/>
            <person name="Zhuang S."/>
            <person name="Wei H."/>
            <person name="Liu B."/>
            <person name="Lei M."/>
            <person name="Yu H."/>
            <person name="Li Y."/>
            <person name="Xu H."/>
            <person name="Wei S."/>
            <person name="He X."/>
            <person name="Fang L."/>
            <person name="Zhang Z."/>
            <person name="Zhang Y."/>
            <person name="Huang X."/>
            <person name="Su Z."/>
            <person name="Tong W."/>
            <person name="Li J."/>
            <person name="Tong Z."/>
            <person name="Li S."/>
            <person name="Ye J."/>
            <person name="Wang L."/>
            <person name="Fang L."/>
            <person name="Lei T."/>
            <person name="Chen C.-S."/>
            <person name="Chen H.-C."/>
            <person name="Xu Z."/>
            <person name="Li H."/>
            <person name="Huang H."/>
            <person name="Zhang F."/>
            <person name="Xu H."/>
            <person name="Li N."/>
            <person name="Zhao C."/>
            <person name="Li S."/>
            <person name="Dong L."/>
            <person name="Huang Y."/>
            <person name="Li L."/>
            <person name="Xi Y."/>
            <person name="Qi Q."/>
            <person name="Li W."/>
            <person name="Zhang B."/>
            <person name="Hu W."/>
            <person name="Zhang Y."/>
            <person name="Tian X."/>
            <person name="Jiao Y."/>
            <person name="Liang X."/>
            <person name="Jin J."/>
            <person name="Gao L."/>
            <person name="Zheng W."/>
            <person name="Hao B."/>
            <person name="Liu S.-M."/>
            <person name="Wang W."/>
            <person name="Yuan L."/>
            <person name="Cao M."/>
            <person name="McDermott J."/>
            <person name="Samudrala R."/>
            <person name="Wang J."/>
            <person name="Wong G.K.-S."/>
            <person name="Yang H."/>
        </authorList>
    </citation>
    <scope>NUCLEOTIDE SEQUENCE [LARGE SCALE GENOMIC DNA]</scope>
    <source>
        <strain>cv. 93-11</strain>
    </source>
</reference>